<organism>
    <name type="scientific">Shewanella amazonensis (strain ATCC BAA-1098 / SB2B)</name>
    <dbReference type="NCBI Taxonomy" id="326297"/>
    <lineage>
        <taxon>Bacteria</taxon>
        <taxon>Pseudomonadati</taxon>
        <taxon>Pseudomonadota</taxon>
        <taxon>Gammaproteobacteria</taxon>
        <taxon>Alteromonadales</taxon>
        <taxon>Shewanellaceae</taxon>
        <taxon>Shewanella</taxon>
    </lineage>
</organism>
<sequence>MGFSFKAFHVDDFGCGMPVSTDAVLLGAWANLDGADAVLDLGAGSGLLALMAAQRCKAPITAIEIDPVAASACRSNFSASPWPDRINLIEADATDAEALAGKVFTHILCNPPYFETGPLSEKPGRAQARHTGSLGFLALCKLITTHLSTEGIASLVLPVESEQAFRQALTHLGLGIRQRVEVSTVEGKAPRRLLLAVSQGEDSYQHEHLAIRDVHGCYTEAMTALTRDFYLKL</sequence>
<feature type="chain" id="PRO_0000387414" description="tRNA1(Val) (adenine(37)-N6)-methyltransferase">
    <location>
        <begin position="1"/>
        <end position="233"/>
    </location>
</feature>
<keyword id="KW-0963">Cytoplasm</keyword>
<keyword id="KW-0489">Methyltransferase</keyword>
<keyword id="KW-1185">Reference proteome</keyword>
<keyword id="KW-0949">S-adenosyl-L-methionine</keyword>
<keyword id="KW-0808">Transferase</keyword>
<keyword id="KW-0819">tRNA processing</keyword>
<protein>
    <recommendedName>
        <fullName evidence="1">tRNA1(Val) (adenine(37)-N6)-methyltransferase</fullName>
        <ecNumber evidence="1">2.1.1.223</ecNumber>
    </recommendedName>
    <alternativeName>
        <fullName evidence="1">tRNA m6A37 methyltransferase</fullName>
    </alternativeName>
</protein>
<evidence type="ECO:0000255" key="1">
    <source>
        <dbReference type="HAMAP-Rule" id="MF_01872"/>
    </source>
</evidence>
<evidence type="ECO:0000305" key="2"/>
<proteinExistence type="inferred from homology"/>
<comment type="function">
    <text evidence="1">Specifically methylates the adenine in position 37 of tRNA(1)(Val) (anticodon cmo5UAC).</text>
</comment>
<comment type="catalytic activity">
    <reaction evidence="1">
        <text>adenosine(37) in tRNA1(Val) + S-adenosyl-L-methionine = N(6)-methyladenosine(37) in tRNA1(Val) + S-adenosyl-L-homocysteine + H(+)</text>
        <dbReference type="Rhea" id="RHEA:43160"/>
        <dbReference type="Rhea" id="RHEA-COMP:10369"/>
        <dbReference type="Rhea" id="RHEA-COMP:10370"/>
        <dbReference type="ChEBI" id="CHEBI:15378"/>
        <dbReference type="ChEBI" id="CHEBI:57856"/>
        <dbReference type="ChEBI" id="CHEBI:59789"/>
        <dbReference type="ChEBI" id="CHEBI:74411"/>
        <dbReference type="ChEBI" id="CHEBI:74449"/>
        <dbReference type="EC" id="2.1.1.223"/>
    </reaction>
</comment>
<comment type="subcellular location">
    <subcellularLocation>
        <location evidence="1">Cytoplasm</location>
    </subcellularLocation>
</comment>
<comment type="similarity">
    <text evidence="1">Belongs to the methyltransferase superfamily. tRNA (adenine-N(6)-)-methyltransferase family.</text>
</comment>
<comment type="sequence caution" evidence="2">
    <conflict type="erroneous initiation">
        <sequence resource="EMBL-CDS" id="ABM00944"/>
    </conflict>
</comment>
<dbReference type="EC" id="2.1.1.223" evidence="1"/>
<dbReference type="EMBL" id="CP000507">
    <property type="protein sequence ID" value="ABM00944.1"/>
    <property type="status" value="ALT_INIT"/>
    <property type="molecule type" value="Genomic_DNA"/>
</dbReference>
<dbReference type="RefSeq" id="WP_041410486.1">
    <property type="nucleotide sequence ID" value="NC_008700.1"/>
</dbReference>
<dbReference type="SMR" id="A1S987"/>
<dbReference type="STRING" id="326297.Sama_2741"/>
<dbReference type="KEGG" id="saz:Sama_2741"/>
<dbReference type="eggNOG" id="COG4123">
    <property type="taxonomic scope" value="Bacteria"/>
</dbReference>
<dbReference type="HOGENOM" id="CLU_061983_0_0_6"/>
<dbReference type="OrthoDB" id="5383291at2"/>
<dbReference type="Proteomes" id="UP000009175">
    <property type="component" value="Chromosome"/>
</dbReference>
<dbReference type="GO" id="GO:0005737">
    <property type="term" value="C:cytoplasm"/>
    <property type="evidence" value="ECO:0007669"/>
    <property type="project" value="UniProtKB-SubCell"/>
</dbReference>
<dbReference type="GO" id="GO:0003676">
    <property type="term" value="F:nucleic acid binding"/>
    <property type="evidence" value="ECO:0007669"/>
    <property type="project" value="InterPro"/>
</dbReference>
<dbReference type="GO" id="GO:0016430">
    <property type="term" value="F:tRNA (adenine-N6)-methyltransferase activity"/>
    <property type="evidence" value="ECO:0007669"/>
    <property type="project" value="UniProtKB-UniRule"/>
</dbReference>
<dbReference type="GO" id="GO:0032259">
    <property type="term" value="P:methylation"/>
    <property type="evidence" value="ECO:0007669"/>
    <property type="project" value="UniProtKB-KW"/>
</dbReference>
<dbReference type="GO" id="GO:0008033">
    <property type="term" value="P:tRNA processing"/>
    <property type="evidence" value="ECO:0007669"/>
    <property type="project" value="UniProtKB-UniRule"/>
</dbReference>
<dbReference type="CDD" id="cd02440">
    <property type="entry name" value="AdoMet_MTases"/>
    <property type="match status" value="1"/>
</dbReference>
<dbReference type="Gene3D" id="3.40.50.150">
    <property type="entry name" value="Vaccinia Virus protein VP39"/>
    <property type="match status" value="1"/>
</dbReference>
<dbReference type="HAMAP" id="MF_01872">
    <property type="entry name" value="tRNA_methyltr_YfiC"/>
    <property type="match status" value="1"/>
</dbReference>
<dbReference type="InterPro" id="IPR002052">
    <property type="entry name" value="DNA_methylase_N6_adenine_CS"/>
</dbReference>
<dbReference type="InterPro" id="IPR029063">
    <property type="entry name" value="SAM-dependent_MTases_sf"/>
</dbReference>
<dbReference type="InterPro" id="IPR007848">
    <property type="entry name" value="Small_mtfrase_dom"/>
</dbReference>
<dbReference type="InterPro" id="IPR050210">
    <property type="entry name" value="tRNA_Adenine-N(6)_MTase"/>
</dbReference>
<dbReference type="InterPro" id="IPR022882">
    <property type="entry name" value="tRNA_adenine-N6_MeTrfase"/>
</dbReference>
<dbReference type="PANTHER" id="PTHR47739">
    <property type="entry name" value="TRNA1(VAL) (ADENINE(37)-N6)-METHYLTRANSFERASE"/>
    <property type="match status" value="1"/>
</dbReference>
<dbReference type="PANTHER" id="PTHR47739:SF1">
    <property type="entry name" value="TRNA1(VAL) (ADENINE(37)-N6)-METHYLTRANSFERASE"/>
    <property type="match status" value="1"/>
</dbReference>
<dbReference type="Pfam" id="PF05175">
    <property type="entry name" value="MTS"/>
    <property type="match status" value="1"/>
</dbReference>
<dbReference type="SUPFAM" id="SSF53335">
    <property type="entry name" value="S-adenosyl-L-methionine-dependent methyltransferases"/>
    <property type="match status" value="1"/>
</dbReference>
<dbReference type="PROSITE" id="PS00092">
    <property type="entry name" value="N6_MTASE"/>
    <property type="match status" value="1"/>
</dbReference>
<name>TRMN6_SHEAM</name>
<reference key="1">
    <citation type="submission" date="2006-12" db="EMBL/GenBank/DDBJ databases">
        <title>Complete sequence of Shewanella amazonensis SB2B.</title>
        <authorList>
            <consortium name="US DOE Joint Genome Institute"/>
            <person name="Copeland A."/>
            <person name="Lucas S."/>
            <person name="Lapidus A."/>
            <person name="Barry K."/>
            <person name="Detter J.C."/>
            <person name="Glavina del Rio T."/>
            <person name="Hammon N."/>
            <person name="Israni S."/>
            <person name="Dalin E."/>
            <person name="Tice H."/>
            <person name="Pitluck S."/>
            <person name="Munk A.C."/>
            <person name="Brettin T."/>
            <person name="Bruce D."/>
            <person name="Han C."/>
            <person name="Tapia R."/>
            <person name="Gilna P."/>
            <person name="Schmutz J."/>
            <person name="Larimer F."/>
            <person name="Land M."/>
            <person name="Hauser L."/>
            <person name="Kyrpides N."/>
            <person name="Mikhailova N."/>
            <person name="Fredrickson J."/>
            <person name="Richardson P."/>
        </authorList>
    </citation>
    <scope>NUCLEOTIDE SEQUENCE [LARGE SCALE GENOMIC DNA]</scope>
    <source>
        <strain>ATCC BAA-1098 / SB2B</strain>
    </source>
</reference>
<accession>A1S987</accession>
<gene>
    <name type="ordered locus">Sama_2741</name>
</gene>